<name>RSMG_CHESB</name>
<keyword id="KW-0963">Cytoplasm</keyword>
<keyword id="KW-0489">Methyltransferase</keyword>
<keyword id="KW-0698">rRNA processing</keyword>
<keyword id="KW-0949">S-adenosyl-L-methionine</keyword>
<keyword id="KW-0808">Transferase</keyword>
<protein>
    <recommendedName>
        <fullName evidence="1">Ribosomal RNA small subunit methyltransferase G</fullName>
        <ecNumber evidence="1">2.1.1.170</ecNumber>
    </recommendedName>
    <alternativeName>
        <fullName evidence="1">16S rRNA 7-methylguanosine methyltransferase</fullName>
        <shortName evidence="1">16S rRNA m7G methyltransferase</shortName>
    </alternativeName>
</protein>
<gene>
    <name evidence="1" type="primary">rsmG</name>
    <name type="ordered locus">Meso_3470</name>
</gene>
<dbReference type="EC" id="2.1.1.170" evidence="1"/>
<dbReference type="EMBL" id="CP000390">
    <property type="protein sequence ID" value="ABG64841.1"/>
    <property type="molecule type" value="Genomic_DNA"/>
</dbReference>
<dbReference type="SMR" id="Q11CN4"/>
<dbReference type="STRING" id="266779.Meso_3470"/>
<dbReference type="KEGG" id="mes:Meso_3470"/>
<dbReference type="eggNOG" id="COG0357">
    <property type="taxonomic scope" value="Bacteria"/>
</dbReference>
<dbReference type="HOGENOM" id="CLU_065341_1_0_5"/>
<dbReference type="OrthoDB" id="9808773at2"/>
<dbReference type="GO" id="GO:0005829">
    <property type="term" value="C:cytosol"/>
    <property type="evidence" value="ECO:0007669"/>
    <property type="project" value="TreeGrafter"/>
</dbReference>
<dbReference type="GO" id="GO:0070043">
    <property type="term" value="F:rRNA (guanine-N7-)-methyltransferase activity"/>
    <property type="evidence" value="ECO:0007669"/>
    <property type="project" value="UniProtKB-UniRule"/>
</dbReference>
<dbReference type="Gene3D" id="3.40.50.150">
    <property type="entry name" value="Vaccinia Virus protein VP39"/>
    <property type="match status" value="1"/>
</dbReference>
<dbReference type="HAMAP" id="MF_00074">
    <property type="entry name" value="16SrRNA_methyltr_G"/>
    <property type="match status" value="1"/>
</dbReference>
<dbReference type="InterPro" id="IPR003682">
    <property type="entry name" value="rRNA_ssu_MeTfrase_G"/>
</dbReference>
<dbReference type="InterPro" id="IPR029063">
    <property type="entry name" value="SAM-dependent_MTases_sf"/>
</dbReference>
<dbReference type="NCBIfam" id="TIGR00138">
    <property type="entry name" value="rsmG_gidB"/>
    <property type="match status" value="1"/>
</dbReference>
<dbReference type="PANTHER" id="PTHR31760">
    <property type="entry name" value="S-ADENOSYL-L-METHIONINE-DEPENDENT METHYLTRANSFERASES SUPERFAMILY PROTEIN"/>
    <property type="match status" value="1"/>
</dbReference>
<dbReference type="PANTHER" id="PTHR31760:SF0">
    <property type="entry name" value="S-ADENOSYL-L-METHIONINE-DEPENDENT METHYLTRANSFERASES SUPERFAMILY PROTEIN"/>
    <property type="match status" value="1"/>
</dbReference>
<dbReference type="Pfam" id="PF02527">
    <property type="entry name" value="GidB"/>
    <property type="match status" value="1"/>
</dbReference>
<dbReference type="PIRSF" id="PIRSF003078">
    <property type="entry name" value="GidB"/>
    <property type="match status" value="1"/>
</dbReference>
<dbReference type="SUPFAM" id="SSF53335">
    <property type="entry name" value="S-adenosyl-L-methionine-dependent methyltransferases"/>
    <property type="match status" value="1"/>
</dbReference>
<proteinExistence type="inferred from homology"/>
<evidence type="ECO:0000255" key="1">
    <source>
        <dbReference type="HAMAP-Rule" id="MF_00074"/>
    </source>
</evidence>
<organism>
    <name type="scientific">Chelativorans sp. (strain BNC1)</name>
    <dbReference type="NCBI Taxonomy" id="266779"/>
    <lineage>
        <taxon>Bacteria</taxon>
        <taxon>Pseudomonadati</taxon>
        <taxon>Pseudomonadota</taxon>
        <taxon>Alphaproteobacteria</taxon>
        <taxon>Hyphomicrobiales</taxon>
        <taxon>Phyllobacteriaceae</taxon>
        <taxon>Chelativorans</taxon>
    </lineage>
</organism>
<accession>Q11CN4</accession>
<feature type="chain" id="PRO_1000010169" description="Ribosomal RNA small subunit methyltransferase G">
    <location>
        <begin position="1"/>
        <end position="210"/>
    </location>
</feature>
<feature type="binding site" evidence="1">
    <location>
        <position position="74"/>
    </location>
    <ligand>
        <name>S-adenosyl-L-methionine</name>
        <dbReference type="ChEBI" id="CHEBI:59789"/>
    </ligand>
</feature>
<feature type="binding site" evidence="1">
    <location>
        <position position="79"/>
    </location>
    <ligand>
        <name>S-adenosyl-L-methionine</name>
        <dbReference type="ChEBI" id="CHEBI:59789"/>
    </ligand>
</feature>
<feature type="binding site" evidence="1">
    <location>
        <begin position="127"/>
        <end position="128"/>
    </location>
    <ligand>
        <name>S-adenosyl-L-methionine</name>
        <dbReference type="ChEBI" id="CHEBI:59789"/>
    </ligand>
</feature>
<feature type="binding site" evidence="1">
    <location>
        <position position="143"/>
    </location>
    <ligand>
        <name>S-adenosyl-L-methionine</name>
        <dbReference type="ChEBI" id="CHEBI:59789"/>
    </ligand>
</feature>
<reference key="1">
    <citation type="submission" date="2006-06" db="EMBL/GenBank/DDBJ databases">
        <title>Complete sequence of chromosome of Mesorhizobium sp. BNC1.</title>
        <authorList>
            <consortium name="US DOE Joint Genome Institute"/>
            <person name="Copeland A."/>
            <person name="Lucas S."/>
            <person name="Lapidus A."/>
            <person name="Barry K."/>
            <person name="Detter J.C."/>
            <person name="Glavina del Rio T."/>
            <person name="Hammon N."/>
            <person name="Israni S."/>
            <person name="Dalin E."/>
            <person name="Tice H."/>
            <person name="Pitluck S."/>
            <person name="Chertkov O."/>
            <person name="Brettin T."/>
            <person name="Bruce D."/>
            <person name="Han C."/>
            <person name="Tapia R."/>
            <person name="Gilna P."/>
            <person name="Schmutz J."/>
            <person name="Larimer F."/>
            <person name="Land M."/>
            <person name="Hauser L."/>
            <person name="Kyrpides N."/>
            <person name="Mikhailova N."/>
            <person name="Richardson P."/>
        </authorList>
    </citation>
    <scope>NUCLEOTIDE SEQUENCE [LARGE SCALE GENOMIC DNA]</scope>
    <source>
        <strain>BNC1</strain>
    </source>
</reference>
<comment type="function">
    <text evidence="1">Specifically methylates the N7 position of guanine in position 527 of 16S rRNA.</text>
</comment>
<comment type="catalytic activity">
    <reaction evidence="1">
        <text>guanosine(527) in 16S rRNA + S-adenosyl-L-methionine = N(7)-methylguanosine(527) in 16S rRNA + S-adenosyl-L-homocysteine</text>
        <dbReference type="Rhea" id="RHEA:42732"/>
        <dbReference type="Rhea" id="RHEA-COMP:10209"/>
        <dbReference type="Rhea" id="RHEA-COMP:10210"/>
        <dbReference type="ChEBI" id="CHEBI:57856"/>
        <dbReference type="ChEBI" id="CHEBI:59789"/>
        <dbReference type="ChEBI" id="CHEBI:74269"/>
        <dbReference type="ChEBI" id="CHEBI:74480"/>
        <dbReference type="EC" id="2.1.1.170"/>
    </reaction>
</comment>
<comment type="subcellular location">
    <subcellularLocation>
        <location evidence="1">Cytoplasm</location>
    </subcellularLocation>
</comment>
<comment type="similarity">
    <text evidence="1">Belongs to the methyltransferase superfamily. RNA methyltransferase RsmG family.</text>
</comment>
<sequence>MMAERFSALQAVAGPVSRETFDGLVAFEGEFRKWSARINLTAPSTLPHLWERHILDSAQLIRIAPAARRWLDLGSGGGFPGAVIAILMKEHAPAQVDLVESNRKKAAFLQTSLASLKAPCMIHPQRIEDCYGQIPPPEVITARALAPLPVLFGLAEPWMKAGARALLHKGRDYRREIEESRDAWGFNLLEHGNEVGGDGVILEISDLRRL</sequence>